<feature type="initiator methionine" description="Removed" evidence="4">
    <location>
        <position position="1"/>
    </location>
</feature>
<feature type="chain" id="PRO_0000050529" description="Mitochondrial outer membrane protein porin 1">
    <location>
        <begin position="2"/>
        <end position="274"/>
    </location>
</feature>
<organism>
    <name type="scientific">Oryza sativa subsp. japonica</name>
    <name type="common">Rice</name>
    <dbReference type="NCBI Taxonomy" id="39947"/>
    <lineage>
        <taxon>Eukaryota</taxon>
        <taxon>Viridiplantae</taxon>
        <taxon>Streptophyta</taxon>
        <taxon>Embryophyta</taxon>
        <taxon>Tracheophyta</taxon>
        <taxon>Spermatophyta</taxon>
        <taxon>Magnoliopsida</taxon>
        <taxon>Liliopsida</taxon>
        <taxon>Poales</taxon>
        <taxon>Poaceae</taxon>
        <taxon>BOP clade</taxon>
        <taxon>Oryzoideae</taxon>
        <taxon>Oryzeae</taxon>
        <taxon>Oryzinae</taxon>
        <taxon>Oryza</taxon>
        <taxon>Oryza sativa</taxon>
    </lineage>
</organism>
<keyword id="KW-0903">Direct protein sequencing</keyword>
<keyword id="KW-0406">Ion transport</keyword>
<keyword id="KW-0472">Membrane</keyword>
<keyword id="KW-0496">Mitochondrion</keyword>
<keyword id="KW-1000">Mitochondrion outer membrane</keyword>
<keyword id="KW-0626">Porin</keyword>
<keyword id="KW-1185">Reference proteome</keyword>
<keyword id="KW-0812">Transmembrane</keyword>
<keyword id="KW-1134">Transmembrane beta strand</keyword>
<keyword id="KW-0813">Transport</keyword>
<comment type="function">
    <text evidence="1">Forms a channel through the mitochondrial outer membrane that allows diffusion of small hydrophilic molecules. The channel adopts an open conformation at low or zero membrane potential and a closed conformation at potentials above 30-40 mV. The open state has a weak anion selectivity whereas the closed state is cation-selective (By similarity).</text>
</comment>
<comment type="subcellular location">
    <subcellularLocation>
        <location evidence="1">Mitochondrion outer membrane</location>
    </subcellularLocation>
</comment>
<comment type="tissue specificity">
    <text evidence="2 3 4">Expressed in shoots and roots. Also expressed in callus, leaves, panicles, sheaths and stems.</text>
</comment>
<comment type="developmental stage">
    <text evidence="2 3">Highly expressed during the first days following germination and then decreases in the later growth stages.</text>
</comment>
<comment type="induction">
    <text evidence="2 3">Not induced by osmotic stress.</text>
</comment>
<comment type="domain">
    <text>Consists mainly of membrane-spanning sided beta-sheets.</text>
</comment>
<comment type="similarity">
    <text evidence="5">Belongs to the eukaryotic mitochondrial porin (TC 1.B.8.1) family.</text>
</comment>
<dbReference type="EMBL" id="Y18104">
    <property type="protein sequence ID" value="CAB82853.1"/>
    <property type="molecule type" value="mRNA"/>
</dbReference>
<dbReference type="EMBL" id="AP005508">
    <property type="protein sequence ID" value="BAD23330.1"/>
    <property type="molecule type" value="Genomic_DNA"/>
</dbReference>
<dbReference type="EMBL" id="AP008215">
    <property type="protein sequence ID" value="BAF24897.1"/>
    <property type="molecule type" value="Genomic_DNA"/>
</dbReference>
<dbReference type="EMBL" id="AP014965">
    <property type="protein sequence ID" value="BAT07696.1"/>
    <property type="molecule type" value="Genomic_DNA"/>
</dbReference>
<dbReference type="EMBL" id="AK060652">
    <property type="protein sequence ID" value="BAG87525.1"/>
    <property type="molecule type" value="mRNA"/>
</dbReference>
<dbReference type="EMBL" id="AK061261">
    <property type="protein sequence ID" value="BAG87823.1"/>
    <property type="molecule type" value="mRNA"/>
</dbReference>
<dbReference type="RefSeq" id="XP_015611862.1">
    <property type="nucleotide sequence ID" value="XM_015756376.1"/>
</dbReference>
<dbReference type="SMR" id="Q6K548"/>
<dbReference type="FunCoup" id="Q6K548">
    <property type="interactions" value="2620"/>
</dbReference>
<dbReference type="STRING" id="39947.Q6K548"/>
<dbReference type="PaxDb" id="39947-Q6K548"/>
<dbReference type="EnsemblPlants" id="Os09t0361400-01">
    <property type="protein sequence ID" value="Os09t0361400-01"/>
    <property type="gene ID" value="Os09g0361400"/>
</dbReference>
<dbReference type="Gramene" id="Os09t0361400-01">
    <property type="protein sequence ID" value="Os09t0361400-01"/>
    <property type="gene ID" value="Os09g0361400"/>
</dbReference>
<dbReference type="KEGG" id="dosa:Os09g0361400"/>
<dbReference type="eggNOG" id="KOG3126">
    <property type="taxonomic scope" value="Eukaryota"/>
</dbReference>
<dbReference type="HOGENOM" id="CLU_069937_0_0_1"/>
<dbReference type="InParanoid" id="Q6K548"/>
<dbReference type="OMA" id="CVEDKIT"/>
<dbReference type="OrthoDB" id="7827681at2759"/>
<dbReference type="PlantReactome" id="R-OSA-1119498">
    <property type="pathway name" value="Phylloquinone biosynthesis"/>
</dbReference>
<dbReference type="Proteomes" id="UP000000763">
    <property type="component" value="Chromosome 9"/>
</dbReference>
<dbReference type="Proteomes" id="UP000059680">
    <property type="component" value="Chromosome 9"/>
</dbReference>
<dbReference type="ExpressionAtlas" id="Q6K548">
    <property type="expression patterns" value="baseline and differential"/>
</dbReference>
<dbReference type="GO" id="GO:0005741">
    <property type="term" value="C:mitochondrial outer membrane"/>
    <property type="evidence" value="ECO:0000318"/>
    <property type="project" value="GO_Central"/>
</dbReference>
<dbReference type="GO" id="GO:0046930">
    <property type="term" value="C:pore complex"/>
    <property type="evidence" value="ECO:0007669"/>
    <property type="project" value="UniProtKB-KW"/>
</dbReference>
<dbReference type="GO" id="GO:0015288">
    <property type="term" value="F:porin activity"/>
    <property type="evidence" value="ECO:0007669"/>
    <property type="project" value="UniProtKB-KW"/>
</dbReference>
<dbReference type="GO" id="GO:0008308">
    <property type="term" value="F:voltage-gated monoatomic anion channel activity"/>
    <property type="evidence" value="ECO:0000318"/>
    <property type="project" value="GO_Central"/>
</dbReference>
<dbReference type="CDD" id="cd07306">
    <property type="entry name" value="Porin3_VDAC"/>
    <property type="match status" value="1"/>
</dbReference>
<dbReference type="FunFam" id="2.40.160.10:FF:000003">
    <property type="entry name" value="Outer mitochondrial membrane protein porin"/>
    <property type="match status" value="1"/>
</dbReference>
<dbReference type="Gene3D" id="2.40.160.10">
    <property type="entry name" value="Porin"/>
    <property type="match status" value="1"/>
</dbReference>
<dbReference type="InterPro" id="IPR023614">
    <property type="entry name" value="Porin_dom_sf"/>
</dbReference>
<dbReference type="InterPro" id="IPR001925">
    <property type="entry name" value="Porin_Euk"/>
</dbReference>
<dbReference type="InterPro" id="IPR027246">
    <property type="entry name" value="Porin_Euk/Tom40"/>
</dbReference>
<dbReference type="PANTHER" id="PTHR11743:SF70">
    <property type="entry name" value="GH26960P-RELATED"/>
    <property type="match status" value="1"/>
</dbReference>
<dbReference type="PANTHER" id="PTHR11743">
    <property type="entry name" value="VOLTAGE-DEPENDENT ANION-SELECTIVE CHANNEL"/>
    <property type="match status" value="1"/>
</dbReference>
<dbReference type="Pfam" id="PF01459">
    <property type="entry name" value="Porin_3"/>
    <property type="match status" value="1"/>
</dbReference>
<dbReference type="PROSITE" id="PS00558">
    <property type="entry name" value="EUKARYOTIC_PORIN"/>
    <property type="match status" value="1"/>
</dbReference>
<gene>
    <name type="primary">VDAC1</name>
    <name type="ordered locus">Os09g0361400</name>
    <name type="ordered locus">LOC_Os09g19734</name>
    <name type="ORF">P0711F01.56-1</name>
</gene>
<reference key="1">
    <citation type="journal article" date="2000" name="Biochim. Biophys. Acta">
        <title>Characterization of a cDNA encoding a rice mitochondrial voltage-dependent anion channel and its gene expression studied upon plant development and osmotic stress.</title>
        <authorList>
            <person name="Roosens N."/>
            <person name="Al-Bitar F.A."/>
            <person name="Jacobs M."/>
            <person name="Homble F."/>
        </authorList>
    </citation>
    <scope>NUCLEOTIDE SEQUENCE [MRNA]</scope>
    <scope>INDUCTION</scope>
    <scope>DEVELOPMENTAL STAGE</scope>
    <scope>TISSUE SPECIFICITY</scope>
    <source>
        <tissue>Leaf</tissue>
        <tissue>Root</tissue>
    </source>
</reference>
<reference key="2">
    <citation type="journal article" date="2005" name="Nature">
        <title>The map-based sequence of the rice genome.</title>
        <authorList>
            <consortium name="International rice genome sequencing project (IRGSP)"/>
        </authorList>
    </citation>
    <scope>NUCLEOTIDE SEQUENCE [LARGE SCALE GENOMIC DNA]</scope>
    <source>
        <strain>cv. Nipponbare</strain>
    </source>
</reference>
<reference key="3">
    <citation type="journal article" date="2008" name="Nucleic Acids Res.">
        <title>The rice annotation project database (RAP-DB): 2008 update.</title>
        <authorList>
            <consortium name="The rice annotation project (RAP)"/>
        </authorList>
    </citation>
    <scope>GENOME REANNOTATION</scope>
    <source>
        <strain>cv. Nipponbare</strain>
    </source>
</reference>
<reference key="4">
    <citation type="journal article" date="2013" name="Rice">
        <title>Improvement of the Oryza sativa Nipponbare reference genome using next generation sequence and optical map data.</title>
        <authorList>
            <person name="Kawahara Y."/>
            <person name="de la Bastide M."/>
            <person name="Hamilton J.P."/>
            <person name="Kanamori H."/>
            <person name="McCombie W.R."/>
            <person name="Ouyang S."/>
            <person name="Schwartz D.C."/>
            <person name="Tanaka T."/>
            <person name="Wu J."/>
            <person name="Zhou S."/>
            <person name="Childs K.L."/>
            <person name="Davidson R.M."/>
            <person name="Lin H."/>
            <person name="Quesada-Ocampo L."/>
            <person name="Vaillancourt B."/>
            <person name="Sakai H."/>
            <person name="Lee S.S."/>
            <person name="Kim J."/>
            <person name="Numa H."/>
            <person name="Itoh T."/>
            <person name="Buell C.R."/>
            <person name="Matsumoto T."/>
        </authorList>
    </citation>
    <scope>GENOME REANNOTATION</scope>
    <source>
        <strain>cv. Nipponbare</strain>
    </source>
</reference>
<reference key="5">
    <citation type="journal article" date="2003" name="Science">
        <title>Collection, mapping, and annotation of over 28,000 cDNA clones from japonica rice.</title>
        <authorList>
            <consortium name="The rice full-length cDNA consortium"/>
        </authorList>
    </citation>
    <scope>NUCLEOTIDE SEQUENCE [LARGE SCALE MRNA]</scope>
    <source>
        <strain>cv. Nipponbare</strain>
    </source>
</reference>
<reference key="6">
    <citation type="journal article" date="2004" name="Nucleic Acids Res.">
        <title>Rice proteome database based on two-dimensional polyacrylamide gel electrophoresis: its status in 2003.</title>
        <authorList>
            <person name="Komatsu S."/>
            <person name="Kojima K."/>
            <person name="Suzuki K."/>
            <person name="Ozaki K."/>
            <person name="Higo K."/>
        </authorList>
    </citation>
    <scope>PROTEIN SEQUENCE OF 2-11</scope>
    <scope>TISSUE SPECIFICITY</scope>
    <source>
        <strain>cv. Nipponbare</strain>
        <tissue>Callus</tissue>
        <tissue>Leaf</tissue>
        <tissue>Panicle</tissue>
        <tissue>Sheath</tissue>
        <tissue>Stem</tissue>
    </source>
</reference>
<reference key="7">
    <citation type="journal article" date="2003" name="Biochim. Biophys. Acta">
        <title>Sequence analysis, transcriptional and posttranscriptional regulation of the rice vdac family.</title>
        <authorList>
            <person name="Al Bitar F."/>
            <person name="Roosens N."/>
            <person name="Smeyers M."/>
            <person name="Vauterin M."/>
            <person name="Van Boxtel J."/>
            <person name="Jacobs M."/>
            <person name="Homble F."/>
        </authorList>
    </citation>
    <scope>TISSUE SPECIFICITY</scope>
    <scope>DEVELOPMENTAL STAGE</scope>
    <scope>INDUCTION</scope>
</reference>
<accession>Q6K548</accession>
<accession>A0A0P0XLN3</accession>
<accession>Q0J2B8</accession>
<accession>Q9LWA7</accession>
<sequence>MVGPGLYPEIGKKARDLLYRDYQTDHKFTLTTYTSNGVAITATSTKKADLIFGEIQSQIKNKNITVDVKANSDSNVVTTVTVDELTPGLKSILSFAVPDQRSGKFELQYSHDYAGVSASIGLTASPVVNLSSVFGTKALAVGADVSLDTATGNLTKYNAGLSFSNDDLIASLNLNNKGDSLTASYYHIVNHSATAVGAELTHSFSSNENSLTFGTQHTLDPLTVVKARFNNSGKASALLQHEWRPKSVWTISAEVDTKAIDKSSKVGIAVALKP</sequence>
<evidence type="ECO:0000250" key="1"/>
<evidence type="ECO:0000269" key="2">
    <source>
    </source>
</evidence>
<evidence type="ECO:0000269" key="3">
    <source>
    </source>
</evidence>
<evidence type="ECO:0000269" key="4">
    <source>
    </source>
</evidence>
<evidence type="ECO:0000305" key="5"/>
<name>VDAC1_ORYSJ</name>
<protein>
    <recommendedName>
        <fullName>Mitochondrial outer membrane protein porin 1</fullName>
    </recommendedName>
    <alternativeName>
        <fullName>Voltage-dependent anion-selective channel protein 1</fullName>
        <shortName>OsVDAC1</shortName>
    </alternativeName>
</protein>
<proteinExistence type="evidence at protein level"/>